<comment type="function">
    <text evidence="1">Catalyzes the conversion of glucosamine-6-phosphate to glucosamine-1-phosphate.</text>
</comment>
<comment type="catalytic activity">
    <reaction evidence="1">
        <text>alpha-D-glucosamine 1-phosphate = D-glucosamine 6-phosphate</text>
        <dbReference type="Rhea" id="RHEA:23424"/>
        <dbReference type="ChEBI" id="CHEBI:58516"/>
        <dbReference type="ChEBI" id="CHEBI:58725"/>
        <dbReference type="EC" id="5.4.2.10"/>
    </reaction>
</comment>
<comment type="cofactor">
    <cofactor evidence="1">
        <name>Mg(2+)</name>
        <dbReference type="ChEBI" id="CHEBI:18420"/>
    </cofactor>
    <text evidence="1">Binds 1 Mg(2+) ion per subunit.</text>
</comment>
<comment type="PTM">
    <text evidence="1">Activated by phosphorylation.</text>
</comment>
<comment type="similarity">
    <text evidence="1">Belongs to the phosphohexose mutase family.</text>
</comment>
<organism>
    <name type="scientific">Halorhodospira halophila (strain DSM 244 / SL1)</name>
    <name type="common">Ectothiorhodospira halophila (strain DSM 244 / SL1)</name>
    <dbReference type="NCBI Taxonomy" id="349124"/>
    <lineage>
        <taxon>Bacteria</taxon>
        <taxon>Pseudomonadati</taxon>
        <taxon>Pseudomonadota</taxon>
        <taxon>Gammaproteobacteria</taxon>
        <taxon>Chromatiales</taxon>
        <taxon>Ectothiorhodospiraceae</taxon>
        <taxon>Halorhodospira</taxon>
    </lineage>
</organism>
<reference key="1">
    <citation type="submission" date="2006-12" db="EMBL/GenBank/DDBJ databases">
        <title>Complete sequence of Halorhodospira halophila SL1.</title>
        <authorList>
            <consortium name="US DOE Joint Genome Institute"/>
            <person name="Copeland A."/>
            <person name="Lucas S."/>
            <person name="Lapidus A."/>
            <person name="Barry K."/>
            <person name="Detter J.C."/>
            <person name="Glavina del Rio T."/>
            <person name="Hammon N."/>
            <person name="Israni S."/>
            <person name="Dalin E."/>
            <person name="Tice H."/>
            <person name="Pitluck S."/>
            <person name="Saunders E."/>
            <person name="Brettin T."/>
            <person name="Bruce D."/>
            <person name="Han C."/>
            <person name="Tapia R."/>
            <person name="Schmutz J."/>
            <person name="Larimer F."/>
            <person name="Land M."/>
            <person name="Hauser L."/>
            <person name="Kyrpides N."/>
            <person name="Mikhailova N."/>
            <person name="Hoff W."/>
            <person name="Richardson P."/>
        </authorList>
    </citation>
    <scope>NUCLEOTIDE SEQUENCE [LARGE SCALE GENOMIC DNA]</scope>
    <source>
        <strain>DSM 244 / SL1</strain>
    </source>
</reference>
<dbReference type="EC" id="5.4.2.10" evidence="1"/>
<dbReference type="EMBL" id="CP000544">
    <property type="protein sequence ID" value="ABM62532.1"/>
    <property type="molecule type" value="Genomic_DNA"/>
</dbReference>
<dbReference type="RefSeq" id="WP_011814554.1">
    <property type="nucleotide sequence ID" value="NC_008789.1"/>
</dbReference>
<dbReference type="SMR" id="A1WXX0"/>
<dbReference type="STRING" id="349124.Hhal_1768"/>
<dbReference type="KEGG" id="hha:Hhal_1768"/>
<dbReference type="eggNOG" id="COG1109">
    <property type="taxonomic scope" value="Bacteria"/>
</dbReference>
<dbReference type="HOGENOM" id="CLU_016950_7_0_6"/>
<dbReference type="OrthoDB" id="9803322at2"/>
<dbReference type="Proteomes" id="UP000000647">
    <property type="component" value="Chromosome"/>
</dbReference>
<dbReference type="GO" id="GO:0005829">
    <property type="term" value="C:cytosol"/>
    <property type="evidence" value="ECO:0007669"/>
    <property type="project" value="TreeGrafter"/>
</dbReference>
<dbReference type="GO" id="GO:0000287">
    <property type="term" value="F:magnesium ion binding"/>
    <property type="evidence" value="ECO:0007669"/>
    <property type="project" value="UniProtKB-UniRule"/>
</dbReference>
<dbReference type="GO" id="GO:0008966">
    <property type="term" value="F:phosphoglucosamine mutase activity"/>
    <property type="evidence" value="ECO:0007669"/>
    <property type="project" value="UniProtKB-UniRule"/>
</dbReference>
<dbReference type="GO" id="GO:0004615">
    <property type="term" value="F:phosphomannomutase activity"/>
    <property type="evidence" value="ECO:0007669"/>
    <property type="project" value="TreeGrafter"/>
</dbReference>
<dbReference type="GO" id="GO:0005975">
    <property type="term" value="P:carbohydrate metabolic process"/>
    <property type="evidence" value="ECO:0007669"/>
    <property type="project" value="InterPro"/>
</dbReference>
<dbReference type="GO" id="GO:0009252">
    <property type="term" value="P:peptidoglycan biosynthetic process"/>
    <property type="evidence" value="ECO:0007669"/>
    <property type="project" value="TreeGrafter"/>
</dbReference>
<dbReference type="GO" id="GO:0006048">
    <property type="term" value="P:UDP-N-acetylglucosamine biosynthetic process"/>
    <property type="evidence" value="ECO:0007669"/>
    <property type="project" value="TreeGrafter"/>
</dbReference>
<dbReference type="CDD" id="cd05802">
    <property type="entry name" value="GlmM"/>
    <property type="match status" value="1"/>
</dbReference>
<dbReference type="FunFam" id="3.30.310.50:FF:000001">
    <property type="entry name" value="Phosphoglucosamine mutase"/>
    <property type="match status" value="1"/>
</dbReference>
<dbReference type="FunFam" id="3.40.120.10:FF:000001">
    <property type="entry name" value="Phosphoglucosamine mutase"/>
    <property type="match status" value="1"/>
</dbReference>
<dbReference type="FunFam" id="3.40.120.10:FF:000003">
    <property type="entry name" value="Phosphoglucosamine mutase"/>
    <property type="match status" value="1"/>
</dbReference>
<dbReference type="Gene3D" id="3.40.120.10">
    <property type="entry name" value="Alpha-D-Glucose-1,6-Bisphosphate, subunit A, domain 3"/>
    <property type="match status" value="3"/>
</dbReference>
<dbReference type="Gene3D" id="3.30.310.50">
    <property type="entry name" value="Alpha-D-phosphohexomutase, C-terminal domain"/>
    <property type="match status" value="1"/>
</dbReference>
<dbReference type="HAMAP" id="MF_01554_B">
    <property type="entry name" value="GlmM_B"/>
    <property type="match status" value="1"/>
</dbReference>
<dbReference type="InterPro" id="IPR005844">
    <property type="entry name" value="A-D-PHexomutase_a/b/a-I"/>
</dbReference>
<dbReference type="InterPro" id="IPR016055">
    <property type="entry name" value="A-D-PHexomutase_a/b/a-I/II/III"/>
</dbReference>
<dbReference type="InterPro" id="IPR005845">
    <property type="entry name" value="A-D-PHexomutase_a/b/a-II"/>
</dbReference>
<dbReference type="InterPro" id="IPR005846">
    <property type="entry name" value="A-D-PHexomutase_a/b/a-III"/>
</dbReference>
<dbReference type="InterPro" id="IPR005843">
    <property type="entry name" value="A-D-PHexomutase_C"/>
</dbReference>
<dbReference type="InterPro" id="IPR036900">
    <property type="entry name" value="A-D-PHexomutase_C_sf"/>
</dbReference>
<dbReference type="InterPro" id="IPR016066">
    <property type="entry name" value="A-D-PHexomutase_CS"/>
</dbReference>
<dbReference type="InterPro" id="IPR005841">
    <property type="entry name" value="Alpha-D-phosphohexomutase_SF"/>
</dbReference>
<dbReference type="InterPro" id="IPR006352">
    <property type="entry name" value="GlmM_bact"/>
</dbReference>
<dbReference type="InterPro" id="IPR050060">
    <property type="entry name" value="Phosphoglucosamine_mutase"/>
</dbReference>
<dbReference type="NCBIfam" id="TIGR01455">
    <property type="entry name" value="glmM"/>
    <property type="match status" value="1"/>
</dbReference>
<dbReference type="NCBIfam" id="NF008139">
    <property type="entry name" value="PRK10887.1"/>
    <property type="match status" value="1"/>
</dbReference>
<dbReference type="PANTHER" id="PTHR42946:SF1">
    <property type="entry name" value="PHOSPHOGLUCOMUTASE (ALPHA-D-GLUCOSE-1,6-BISPHOSPHATE-DEPENDENT)"/>
    <property type="match status" value="1"/>
</dbReference>
<dbReference type="PANTHER" id="PTHR42946">
    <property type="entry name" value="PHOSPHOHEXOSE MUTASE"/>
    <property type="match status" value="1"/>
</dbReference>
<dbReference type="Pfam" id="PF02878">
    <property type="entry name" value="PGM_PMM_I"/>
    <property type="match status" value="1"/>
</dbReference>
<dbReference type="Pfam" id="PF02879">
    <property type="entry name" value="PGM_PMM_II"/>
    <property type="match status" value="1"/>
</dbReference>
<dbReference type="Pfam" id="PF02880">
    <property type="entry name" value="PGM_PMM_III"/>
    <property type="match status" value="1"/>
</dbReference>
<dbReference type="Pfam" id="PF00408">
    <property type="entry name" value="PGM_PMM_IV"/>
    <property type="match status" value="1"/>
</dbReference>
<dbReference type="PRINTS" id="PR00509">
    <property type="entry name" value="PGMPMM"/>
</dbReference>
<dbReference type="SUPFAM" id="SSF55957">
    <property type="entry name" value="Phosphoglucomutase, C-terminal domain"/>
    <property type="match status" value="1"/>
</dbReference>
<dbReference type="SUPFAM" id="SSF53738">
    <property type="entry name" value="Phosphoglucomutase, first 3 domains"/>
    <property type="match status" value="3"/>
</dbReference>
<dbReference type="PROSITE" id="PS00710">
    <property type="entry name" value="PGM_PMM"/>
    <property type="match status" value="1"/>
</dbReference>
<name>GLMM_HALHL</name>
<keyword id="KW-0413">Isomerase</keyword>
<keyword id="KW-0460">Magnesium</keyword>
<keyword id="KW-0479">Metal-binding</keyword>
<keyword id="KW-0597">Phosphoprotein</keyword>
<keyword id="KW-1185">Reference proteome</keyword>
<sequence>MAEERSYFGTDGIRGRVGEAPITPDFVLRLGWAAGRVLAGEGQRKVVIGKDTRLSGYMFESALEAGFAAAGVHSLMLGPMPTPAIAYLTRTLHARAGVVISASHNPHHDNGIKFFGPDGYKLDDATEEAIERLLQDGPPQMVRCEELGRATRINDAVGRYIEFCKGSVQRQIDLRGLRVVVDCAHGATYQAAPAVLAELGADVVVIGNEPDGLNINVDHGSQHPERLCQRVVEASADVGVAFDGDGDRVIMVDRYGRVIDGDGLLYIIATARVARGQVRGAVVGTQMTNLGLEVALQELGLVLERTRVGDRYVLERLLQVGGTLGGESSGHIICLDRTTTGDGLISALQVLEAMVTTGRPLDELVAGMHYYPQRLVNVPVSRGPDVIRLPAVTEAVEEAEHQLGDHGRVLLRPSGTEPLLRVMVEGADEGQVNRLADWLAVTVETAARGAATDPI</sequence>
<proteinExistence type="inferred from homology"/>
<gene>
    <name evidence="1" type="primary">glmM</name>
    <name type="ordered locus">Hhal_1768</name>
</gene>
<protein>
    <recommendedName>
        <fullName evidence="1">Phosphoglucosamine mutase</fullName>
        <ecNumber evidence="1">5.4.2.10</ecNumber>
    </recommendedName>
</protein>
<evidence type="ECO:0000255" key="1">
    <source>
        <dbReference type="HAMAP-Rule" id="MF_01554"/>
    </source>
</evidence>
<accession>A1WXX0</accession>
<feature type="chain" id="PRO_0000305641" description="Phosphoglucosamine mutase">
    <location>
        <begin position="1"/>
        <end position="455"/>
    </location>
</feature>
<feature type="active site" description="Phosphoserine intermediate" evidence="1">
    <location>
        <position position="103"/>
    </location>
</feature>
<feature type="binding site" description="via phosphate group" evidence="1">
    <location>
        <position position="103"/>
    </location>
    <ligand>
        <name>Mg(2+)</name>
        <dbReference type="ChEBI" id="CHEBI:18420"/>
    </ligand>
</feature>
<feature type="binding site" evidence="1">
    <location>
        <position position="243"/>
    </location>
    <ligand>
        <name>Mg(2+)</name>
        <dbReference type="ChEBI" id="CHEBI:18420"/>
    </ligand>
</feature>
<feature type="binding site" evidence="1">
    <location>
        <position position="245"/>
    </location>
    <ligand>
        <name>Mg(2+)</name>
        <dbReference type="ChEBI" id="CHEBI:18420"/>
    </ligand>
</feature>
<feature type="binding site" evidence="1">
    <location>
        <position position="247"/>
    </location>
    <ligand>
        <name>Mg(2+)</name>
        <dbReference type="ChEBI" id="CHEBI:18420"/>
    </ligand>
</feature>
<feature type="modified residue" description="Phosphoserine" evidence="1">
    <location>
        <position position="103"/>
    </location>
</feature>